<evidence type="ECO:0000250" key="1">
    <source>
        <dbReference type="UniProtKB" id="P03897"/>
    </source>
</evidence>
<evidence type="ECO:0000250" key="2">
    <source>
        <dbReference type="UniProtKB" id="P03898"/>
    </source>
</evidence>
<evidence type="ECO:0000255" key="3"/>
<evidence type="ECO:0000305" key="4"/>
<evidence type="ECO:0000312" key="5">
    <source>
        <dbReference type="Proteomes" id="UP000002356"/>
    </source>
</evidence>
<evidence type="ECO:0007829" key="6">
    <source>
        <dbReference type="PDB" id="6ZKA"/>
    </source>
</evidence>
<evidence type="ECO:0007829" key="7">
    <source>
        <dbReference type="PDB" id="6ZKB"/>
    </source>
</evidence>
<evidence type="ECO:0007829" key="8">
    <source>
        <dbReference type="PDB" id="6ZKD"/>
    </source>
</evidence>
<evidence type="ECO:0007829" key="9">
    <source>
        <dbReference type="PDB" id="6ZKE"/>
    </source>
</evidence>
<evidence type="ECO:0007829" key="10">
    <source>
        <dbReference type="PDB" id="7ZDM"/>
    </source>
</evidence>
<gene>
    <name evidence="1" type="primary">MT-ND3</name>
    <name type="synonym">MTND3</name>
    <name type="synonym">NADH3</name>
    <name type="synonym">ND3</name>
</gene>
<sequence length="115" mass="13103">MNLMITLLTNFTLATLLVTIAFWLPQLNVYSEKTSPYECGFDPMGSARLPFSMKFFLVAITFLLFDLEIALLLPLPWASQTTNLNTMLTMALLLIFLLAVSLAYEWTQKGLEWTE</sequence>
<keyword id="KW-0002">3D-structure</keyword>
<keyword id="KW-0249">Electron transport</keyword>
<keyword id="KW-0472">Membrane</keyword>
<keyword id="KW-0496">Mitochondrion</keyword>
<keyword id="KW-0999">Mitochondrion inner membrane</keyword>
<keyword id="KW-0520">NAD</keyword>
<keyword id="KW-1185">Reference proteome</keyword>
<keyword id="KW-0679">Respiratory chain</keyword>
<keyword id="KW-1278">Translocase</keyword>
<keyword id="KW-0812">Transmembrane</keyword>
<keyword id="KW-1133">Transmembrane helix</keyword>
<keyword id="KW-0813">Transport</keyword>
<keyword id="KW-0830">Ubiquinone</keyword>
<accession>O78753</accession>
<protein>
    <recommendedName>
        <fullName evidence="1">NADH-ubiquinone oxidoreductase chain 3</fullName>
        <ecNumber evidence="1">7.1.1.2</ecNumber>
    </recommendedName>
    <alternativeName>
        <fullName>NADH dehydrogenase subunit 3</fullName>
    </alternativeName>
</protein>
<dbReference type="EC" id="7.1.1.2" evidence="1"/>
<dbReference type="EMBL" id="AF010406">
    <property type="protein sequence ID" value="AAD10102.1"/>
    <property type="molecule type" value="Genomic_DNA"/>
</dbReference>
<dbReference type="PIR" id="T11057">
    <property type="entry name" value="T11057"/>
</dbReference>
<dbReference type="RefSeq" id="NP_008413.1">
    <property type="nucleotide sequence ID" value="NC_001941.1"/>
</dbReference>
<dbReference type="PDB" id="5LNK">
    <property type="method" value="EM"/>
    <property type="resolution" value="3.90 A"/>
    <property type="chains" value="A=1-115"/>
</dbReference>
<dbReference type="PDB" id="6Q9B">
    <property type="method" value="EM"/>
    <property type="resolution" value="3.90 A"/>
    <property type="chains" value="D3=1-115"/>
</dbReference>
<dbReference type="PDB" id="6QA9">
    <property type="method" value="EM"/>
    <property type="resolution" value="4.10 A"/>
    <property type="chains" value="D3=1-115"/>
</dbReference>
<dbReference type="PDB" id="6QBX">
    <property type="method" value="EM"/>
    <property type="resolution" value="4.20 A"/>
    <property type="chains" value="D3=1-115"/>
</dbReference>
<dbReference type="PDB" id="6QC2">
    <property type="method" value="EM"/>
    <property type="resolution" value="4.20 A"/>
    <property type="chains" value="D3=1-115"/>
</dbReference>
<dbReference type="PDB" id="6QC3">
    <property type="method" value="EM"/>
    <property type="resolution" value="4.20 A"/>
    <property type="chains" value="D3=1-115"/>
</dbReference>
<dbReference type="PDB" id="6QC4">
    <property type="method" value="EM"/>
    <property type="resolution" value="4.60 A"/>
    <property type="chains" value="D3=1-115"/>
</dbReference>
<dbReference type="PDB" id="6QC5">
    <property type="method" value="EM"/>
    <property type="resolution" value="4.30 A"/>
    <property type="chains" value="D3=1-115"/>
</dbReference>
<dbReference type="PDB" id="6QC6">
    <property type="method" value="EM"/>
    <property type="resolution" value="4.10 A"/>
    <property type="chains" value="D3=1-115"/>
</dbReference>
<dbReference type="PDB" id="6QC7">
    <property type="method" value="EM"/>
    <property type="resolution" value="4.40 A"/>
    <property type="chains" value="D3=1-115"/>
</dbReference>
<dbReference type="PDB" id="6QC8">
    <property type="method" value="EM"/>
    <property type="resolution" value="4.20 A"/>
    <property type="chains" value="D3=1-115"/>
</dbReference>
<dbReference type="PDB" id="6QC9">
    <property type="method" value="EM"/>
    <property type="resolution" value="5.70 A"/>
    <property type="chains" value="D3=1-115"/>
</dbReference>
<dbReference type="PDB" id="6QCA">
    <property type="method" value="EM"/>
    <property type="resolution" value="6.20 A"/>
    <property type="chains" value="D3=1-115"/>
</dbReference>
<dbReference type="PDB" id="6QCF">
    <property type="method" value="EM"/>
    <property type="resolution" value="6.50 A"/>
    <property type="chains" value="D3=1-115"/>
</dbReference>
<dbReference type="PDB" id="6ZKA">
    <property type="method" value="EM"/>
    <property type="resolution" value="2.50 A"/>
    <property type="chains" value="A=1-115"/>
</dbReference>
<dbReference type="PDB" id="6ZKB">
    <property type="method" value="EM"/>
    <property type="resolution" value="2.90 A"/>
    <property type="chains" value="A=1-115"/>
</dbReference>
<dbReference type="PDB" id="6ZKC">
    <property type="method" value="EM"/>
    <property type="resolution" value="3.10 A"/>
    <property type="chains" value="A=1-115"/>
</dbReference>
<dbReference type="PDB" id="6ZKD">
    <property type="method" value="EM"/>
    <property type="resolution" value="2.70 A"/>
    <property type="chains" value="A=1-115"/>
</dbReference>
<dbReference type="PDB" id="6ZKE">
    <property type="method" value="EM"/>
    <property type="resolution" value="2.60 A"/>
    <property type="chains" value="A=1-115"/>
</dbReference>
<dbReference type="PDB" id="6ZKF">
    <property type="method" value="EM"/>
    <property type="resolution" value="2.80 A"/>
    <property type="chains" value="A=1-115"/>
</dbReference>
<dbReference type="PDB" id="6ZKG">
    <property type="method" value="EM"/>
    <property type="resolution" value="3.40 A"/>
    <property type="chains" value="A=1-115"/>
</dbReference>
<dbReference type="PDB" id="6ZKH">
    <property type="method" value="EM"/>
    <property type="resolution" value="3.00 A"/>
    <property type="chains" value="A=1-115"/>
</dbReference>
<dbReference type="PDB" id="6ZKI">
    <property type="method" value="EM"/>
    <property type="resolution" value="2.80 A"/>
    <property type="chains" value="A=1-115"/>
</dbReference>
<dbReference type="PDB" id="6ZKJ">
    <property type="method" value="EM"/>
    <property type="resolution" value="3.00 A"/>
    <property type="chains" value="A=1-115"/>
</dbReference>
<dbReference type="PDB" id="6ZKK">
    <property type="method" value="EM"/>
    <property type="resolution" value="3.70 A"/>
    <property type="chains" value="A=1-115"/>
</dbReference>
<dbReference type="PDB" id="6ZKL">
    <property type="method" value="EM"/>
    <property type="resolution" value="3.10 A"/>
    <property type="chains" value="A=1-115"/>
</dbReference>
<dbReference type="PDB" id="6ZKM">
    <property type="method" value="EM"/>
    <property type="resolution" value="2.80 A"/>
    <property type="chains" value="A=1-115"/>
</dbReference>
<dbReference type="PDB" id="6ZKN">
    <property type="method" value="EM"/>
    <property type="resolution" value="2.90 A"/>
    <property type="chains" value="A=1-115"/>
</dbReference>
<dbReference type="PDB" id="6ZKO">
    <property type="method" value="EM"/>
    <property type="resolution" value="3.80 A"/>
    <property type="chains" value="A=1-115"/>
</dbReference>
<dbReference type="PDB" id="6ZKP">
    <property type="method" value="EM"/>
    <property type="resolution" value="3.20 A"/>
    <property type="chains" value="A=1-115"/>
</dbReference>
<dbReference type="PDB" id="6ZKQ">
    <property type="method" value="EM"/>
    <property type="resolution" value="3.30 A"/>
    <property type="chains" value="A=1-115"/>
</dbReference>
<dbReference type="PDB" id="6ZKR">
    <property type="method" value="EM"/>
    <property type="resolution" value="3.50 A"/>
    <property type="chains" value="A=1-115"/>
</dbReference>
<dbReference type="PDB" id="6ZKS">
    <property type="method" value="EM"/>
    <property type="resolution" value="3.10 A"/>
    <property type="chains" value="A=1-115"/>
</dbReference>
<dbReference type="PDB" id="6ZKT">
    <property type="method" value="EM"/>
    <property type="resolution" value="2.80 A"/>
    <property type="chains" value="A=1-115"/>
</dbReference>
<dbReference type="PDB" id="6ZKU">
    <property type="method" value="EM"/>
    <property type="resolution" value="3.00 A"/>
    <property type="chains" value="A=1-115"/>
</dbReference>
<dbReference type="PDB" id="6ZKV">
    <property type="method" value="EM"/>
    <property type="resolution" value="2.90 A"/>
    <property type="chains" value="A=1-115"/>
</dbReference>
<dbReference type="PDB" id="7ZD6">
    <property type="method" value="EM"/>
    <property type="resolution" value="3.16 A"/>
    <property type="chains" value="A=1-115"/>
</dbReference>
<dbReference type="PDB" id="7ZDH">
    <property type="method" value="EM"/>
    <property type="resolution" value="3.46 A"/>
    <property type="chains" value="A=1-115"/>
</dbReference>
<dbReference type="PDB" id="7ZDJ">
    <property type="method" value="EM"/>
    <property type="resolution" value="3.25 A"/>
    <property type="chains" value="A=1-115"/>
</dbReference>
<dbReference type="PDB" id="7ZDM">
    <property type="method" value="EM"/>
    <property type="resolution" value="3.44 A"/>
    <property type="chains" value="A=1-115"/>
</dbReference>
<dbReference type="PDB" id="7ZDP">
    <property type="method" value="EM"/>
    <property type="resolution" value="3.88 A"/>
    <property type="chains" value="A=1-115"/>
</dbReference>
<dbReference type="PDB" id="7ZEB">
    <property type="method" value="EM"/>
    <property type="resolution" value="3.80 A"/>
    <property type="chains" value="A=1-115"/>
</dbReference>
<dbReference type="PDBsum" id="5LNK"/>
<dbReference type="PDBsum" id="6Q9B"/>
<dbReference type="PDBsum" id="6QA9"/>
<dbReference type="PDBsum" id="6QBX"/>
<dbReference type="PDBsum" id="6QC2"/>
<dbReference type="PDBsum" id="6QC3"/>
<dbReference type="PDBsum" id="6QC4"/>
<dbReference type="PDBsum" id="6QC5"/>
<dbReference type="PDBsum" id="6QC6"/>
<dbReference type="PDBsum" id="6QC7"/>
<dbReference type="PDBsum" id="6QC8"/>
<dbReference type="PDBsum" id="6QC9"/>
<dbReference type="PDBsum" id="6QCA"/>
<dbReference type="PDBsum" id="6QCF"/>
<dbReference type="PDBsum" id="6ZKA"/>
<dbReference type="PDBsum" id="6ZKB"/>
<dbReference type="PDBsum" id="6ZKC"/>
<dbReference type="PDBsum" id="6ZKD"/>
<dbReference type="PDBsum" id="6ZKE"/>
<dbReference type="PDBsum" id="6ZKF"/>
<dbReference type="PDBsum" id="6ZKG"/>
<dbReference type="PDBsum" id="6ZKH"/>
<dbReference type="PDBsum" id="6ZKI"/>
<dbReference type="PDBsum" id="6ZKJ"/>
<dbReference type="PDBsum" id="6ZKK"/>
<dbReference type="PDBsum" id="6ZKL"/>
<dbReference type="PDBsum" id="6ZKM"/>
<dbReference type="PDBsum" id="6ZKN"/>
<dbReference type="PDBsum" id="6ZKO"/>
<dbReference type="PDBsum" id="6ZKP"/>
<dbReference type="PDBsum" id="6ZKQ"/>
<dbReference type="PDBsum" id="6ZKR"/>
<dbReference type="PDBsum" id="6ZKS"/>
<dbReference type="PDBsum" id="6ZKT"/>
<dbReference type="PDBsum" id="6ZKU"/>
<dbReference type="PDBsum" id="6ZKV"/>
<dbReference type="PDBsum" id="7ZD6"/>
<dbReference type="PDBsum" id="7ZDH"/>
<dbReference type="PDBsum" id="7ZDJ"/>
<dbReference type="PDBsum" id="7ZDM"/>
<dbReference type="PDBsum" id="7ZDP"/>
<dbReference type="PDBsum" id="7ZEB"/>
<dbReference type="EMDB" id="EMD-11242"/>
<dbReference type="EMDB" id="EMD-11243"/>
<dbReference type="EMDB" id="EMD-11244"/>
<dbReference type="EMDB" id="EMD-11245"/>
<dbReference type="EMDB" id="EMD-11246"/>
<dbReference type="EMDB" id="EMD-11247"/>
<dbReference type="EMDB" id="EMD-11248"/>
<dbReference type="EMDB" id="EMD-11249"/>
<dbReference type="EMDB" id="EMD-11250"/>
<dbReference type="EMDB" id="EMD-11251"/>
<dbReference type="EMDB" id="EMD-11252"/>
<dbReference type="EMDB" id="EMD-11253"/>
<dbReference type="EMDB" id="EMD-11254"/>
<dbReference type="EMDB" id="EMD-11255"/>
<dbReference type="EMDB" id="EMD-11256"/>
<dbReference type="EMDB" id="EMD-11257"/>
<dbReference type="EMDB" id="EMD-11258"/>
<dbReference type="EMDB" id="EMD-11259"/>
<dbReference type="EMDB" id="EMD-11260"/>
<dbReference type="EMDB" id="EMD-11261"/>
<dbReference type="EMDB" id="EMD-11262"/>
<dbReference type="EMDB" id="EMD-11263"/>
<dbReference type="EMDB" id="EMD-14637"/>
<dbReference type="EMDB" id="EMD-14648"/>
<dbReference type="EMDB" id="EMD-14651"/>
<dbReference type="EMDB" id="EMD-14658"/>
<dbReference type="EMDB" id="EMD-14664"/>
<dbReference type="EMDB" id="EMD-14688"/>
<dbReference type="EMDB" id="EMD-4479"/>
<dbReference type="EMDB" id="EMD-4482"/>
<dbReference type="EMDB" id="EMD-4493"/>
<dbReference type="EMDB" id="EMD-4494"/>
<dbReference type="EMDB" id="EMD-4495"/>
<dbReference type="EMDB" id="EMD-4496"/>
<dbReference type="EMDB" id="EMD-4497"/>
<dbReference type="EMDB" id="EMD-4498"/>
<dbReference type="EMDB" id="EMD-4499"/>
<dbReference type="EMDB" id="EMD-4500"/>
<dbReference type="EMDB" id="EMD-4501"/>
<dbReference type="EMDB" id="EMD-4502"/>
<dbReference type="EMDB" id="EMD-4505"/>
<dbReference type="EMDB" id="EMD-8128"/>
<dbReference type="SMR" id="O78753"/>
<dbReference type="STRING" id="9940.ENSOARP00000000008"/>
<dbReference type="PaxDb" id="9940-ENSOARP00000000008"/>
<dbReference type="Ensembl" id="ENSOART00025000026">
    <property type="protein sequence ID" value="ENSOARP00025000009"/>
    <property type="gene ID" value="ENSOARG00025000026"/>
</dbReference>
<dbReference type="Ensembl" id="ENSOART00040000026">
    <property type="protein sequence ID" value="ENSOARP00040000009"/>
    <property type="gene ID" value="ENSOARG00040000026"/>
</dbReference>
<dbReference type="Ensembl" id="ENSOART00180000026">
    <property type="protein sequence ID" value="ENSOARP00180000009"/>
    <property type="gene ID" value="ENSOARG00180000026"/>
</dbReference>
<dbReference type="Ensembl" id="ENSOART00185000026">
    <property type="protein sequence ID" value="ENSOARP00185000009"/>
    <property type="gene ID" value="ENSOARG00185000026"/>
</dbReference>
<dbReference type="Ensembl" id="ENSOART00215000026">
    <property type="protein sequence ID" value="ENSOARP00215000009"/>
    <property type="gene ID" value="ENSOARG00215000026"/>
</dbReference>
<dbReference type="Ensembl" id="ENSOART00220000026">
    <property type="protein sequence ID" value="ENSOARP00220000009"/>
    <property type="gene ID" value="ENSOARG00220000026"/>
</dbReference>
<dbReference type="Ensembl" id="ENSOART00225000026">
    <property type="protein sequence ID" value="ENSOARP00225000009"/>
    <property type="gene ID" value="ENSOARG00225000026"/>
</dbReference>
<dbReference type="Ensembl" id="ENSOART00260000026">
    <property type="protein sequence ID" value="ENSOARP00260000009"/>
    <property type="gene ID" value="ENSOARG00260000026"/>
</dbReference>
<dbReference type="GeneID" id="808255"/>
<dbReference type="KEGG" id="oas:808255"/>
<dbReference type="CTD" id="4537"/>
<dbReference type="eggNOG" id="KOG4662">
    <property type="taxonomic scope" value="Eukaryota"/>
</dbReference>
<dbReference type="HOGENOM" id="CLU_119549_3_1_1"/>
<dbReference type="OMA" id="GPRRYNR"/>
<dbReference type="OrthoDB" id="154075at2759"/>
<dbReference type="Proteomes" id="UP000002356">
    <property type="component" value="Mitochondrion"/>
</dbReference>
<dbReference type="Bgee" id="ENSOARG00000000025">
    <property type="expression patterns" value="Expressed in cerebellum and 52 other cell types or tissues"/>
</dbReference>
<dbReference type="ExpressionAtlas" id="O78753">
    <property type="expression patterns" value="baseline"/>
</dbReference>
<dbReference type="GO" id="GO:0005743">
    <property type="term" value="C:mitochondrial inner membrane"/>
    <property type="evidence" value="ECO:0000250"/>
    <property type="project" value="UniProtKB"/>
</dbReference>
<dbReference type="GO" id="GO:0045271">
    <property type="term" value="C:respiratory chain complex I"/>
    <property type="evidence" value="ECO:0007669"/>
    <property type="project" value="Ensembl"/>
</dbReference>
<dbReference type="GO" id="GO:0008137">
    <property type="term" value="F:NADH dehydrogenase (ubiquinone) activity"/>
    <property type="evidence" value="ECO:0000250"/>
    <property type="project" value="UniProtKB"/>
</dbReference>
<dbReference type="GO" id="GO:0006120">
    <property type="term" value="P:mitochondrial electron transport, NADH to ubiquinone"/>
    <property type="evidence" value="ECO:0000250"/>
    <property type="project" value="UniProtKB"/>
</dbReference>
<dbReference type="FunFam" id="1.20.58.1610:FF:000004">
    <property type="entry name" value="NADH-quinone oxidoreductase subunit A"/>
    <property type="match status" value="1"/>
</dbReference>
<dbReference type="Gene3D" id="1.20.58.1610">
    <property type="entry name" value="NADH:ubiquinone/plastoquinone oxidoreductase, chain 3"/>
    <property type="match status" value="1"/>
</dbReference>
<dbReference type="InterPro" id="IPR000440">
    <property type="entry name" value="NADH_UbQ/plastoQ_OxRdtase_su3"/>
</dbReference>
<dbReference type="InterPro" id="IPR038430">
    <property type="entry name" value="NDAH_ubi_oxred_su3_sf"/>
</dbReference>
<dbReference type="PANTHER" id="PTHR11058">
    <property type="entry name" value="NADH-UBIQUINONE OXIDOREDUCTASE CHAIN 3"/>
    <property type="match status" value="1"/>
</dbReference>
<dbReference type="PANTHER" id="PTHR11058:SF9">
    <property type="entry name" value="NADH-UBIQUINONE OXIDOREDUCTASE CHAIN 3"/>
    <property type="match status" value="1"/>
</dbReference>
<dbReference type="Pfam" id="PF00507">
    <property type="entry name" value="Oxidored_q4"/>
    <property type="match status" value="1"/>
</dbReference>
<proteinExistence type="evidence at protein level"/>
<feature type="chain" id="PRO_0000117831" description="NADH-ubiquinone oxidoreductase chain 3">
    <location>
        <begin position="1"/>
        <end position="115"/>
    </location>
</feature>
<feature type="transmembrane region" description="Helical" evidence="3">
    <location>
        <begin position="3"/>
        <end position="23"/>
    </location>
</feature>
<feature type="transmembrane region" description="Helical" evidence="3">
    <location>
        <begin position="55"/>
        <end position="75"/>
    </location>
</feature>
<feature type="transmembrane region" description="Helical" evidence="3">
    <location>
        <begin position="84"/>
        <end position="104"/>
    </location>
</feature>
<feature type="helix" evidence="6">
    <location>
        <begin position="2"/>
        <end position="23"/>
    </location>
</feature>
<feature type="helix" evidence="9">
    <location>
        <begin position="25"/>
        <end position="27"/>
    </location>
</feature>
<feature type="turn" evidence="7">
    <location>
        <begin position="31"/>
        <end position="34"/>
    </location>
</feature>
<feature type="strand" evidence="9">
    <location>
        <begin position="44"/>
        <end position="46"/>
    </location>
</feature>
<feature type="strand" evidence="10">
    <location>
        <begin position="47"/>
        <end position="49"/>
    </location>
</feature>
<feature type="helix" evidence="6">
    <location>
        <begin position="53"/>
        <end position="72"/>
    </location>
</feature>
<feature type="helix" evidence="6">
    <location>
        <begin position="75"/>
        <end position="78"/>
    </location>
</feature>
<feature type="helix" evidence="6">
    <location>
        <begin position="84"/>
        <end position="107"/>
    </location>
</feature>
<feature type="strand" evidence="8">
    <location>
        <begin position="111"/>
        <end position="113"/>
    </location>
</feature>
<comment type="function">
    <text evidence="1">Core subunit of the mitochondrial membrane respiratory chain NADH dehydrogenase (Complex I) which catalyzes electron transfer from NADH through the respiratory chain, using ubiquinone as an electron acceptor. Essential for the catalytic activity of complex I.</text>
</comment>
<comment type="catalytic activity">
    <reaction evidence="1">
        <text>a ubiquinone + NADH + 5 H(+)(in) = a ubiquinol + NAD(+) + 4 H(+)(out)</text>
        <dbReference type="Rhea" id="RHEA:29091"/>
        <dbReference type="Rhea" id="RHEA-COMP:9565"/>
        <dbReference type="Rhea" id="RHEA-COMP:9566"/>
        <dbReference type="ChEBI" id="CHEBI:15378"/>
        <dbReference type="ChEBI" id="CHEBI:16389"/>
        <dbReference type="ChEBI" id="CHEBI:17976"/>
        <dbReference type="ChEBI" id="CHEBI:57540"/>
        <dbReference type="ChEBI" id="CHEBI:57945"/>
        <dbReference type="EC" id="7.1.1.2"/>
    </reaction>
</comment>
<comment type="subunit">
    <text evidence="1">Core subunit of respiratory chain NADH dehydrogenase (Complex I) which is composed of 45 different subunits. Interacts with TMEM186. Interacts with TMEM242 (By similarity).</text>
</comment>
<comment type="subcellular location">
    <subcellularLocation>
        <location evidence="2">Mitochondrion inner membrane</location>
        <topology evidence="3">Multi-pass membrane protein</topology>
    </subcellularLocation>
</comment>
<comment type="similarity">
    <text evidence="4">Belongs to the complex I subunit 3 family.</text>
</comment>
<reference key="1">
    <citation type="journal article" date="1998" name="J. Mol. Evol.">
        <title>The complete mitochondrial DNA sequence of the domestic sheep (Ovis aries) and comparison with the other major ovine haplotype.</title>
        <authorList>
            <person name="Hiendleder S."/>
            <person name="Lewalski H."/>
            <person name="Wassmuth R."/>
            <person name="Janke A."/>
        </authorList>
    </citation>
    <scope>NUCLEOTIDE SEQUENCE [LARGE SCALE GENOMIC DNA]</scope>
    <source>
        <strain evidence="5">Merinolandschaf</strain>
        <tissue>Liver</tissue>
    </source>
</reference>
<name>NU3M_SHEEP</name>
<organism>
    <name type="scientific">Ovis aries</name>
    <name type="common">Sheep</name>
    <dbReference type="NCBI Taxonomy" id="9940"/>
    <lineage>
        <taxon>Eukaryota</taxon>
        <taxon>Metazoa</taxon>
        <taxon>Chordata</taxon>
        <taxon>Craniata</taxon>
        <taxon>Vertebrata</taxon>
        <taxon>Euteleostomi</taxon>
        <taxon>Mammalia</taxon>
        <taxon>Eutheria</taxon>
        <taxon>Laurasiatheria</taxon>
        <taxon>Artiodactyla</taxon>
        <taxon>Ruminantia</taxon>
        <taxon>Pecora</taxon>
        <taxon>Bovidae</taxon>
        <taxon>Caprinae</taxon>
        <taxon>Ovis</taxon>
    </lineage>
</organism>
<geneLocation type="mitochondrion"/>